<gene>
    <name evidence="1" type="primary">cobB</name>
    <name type="ordered locus">OB3159</name>
</gene>
<evidence type="ECO:0000255" key="1">
    <source>
        <dbReference type="HAMAP-Rule" id="MF_01968"/>
    </source>
</evidence>
<evidence type="ECO:0000255" key="2">
    <source>
        <dbReference type="PROSITE-ProRule" id="PRU00236"/>
    </source>
</evidence>
<reference key="1">
    <citation type="journal article" date="2002" name="Nucleic Acids Res.">
        <title>Genome sequence of Oceanobacillus iheyensis isolated from the Iheya Ridge and its unexpected adaptive capabilities to extreme environments.</title>
        <authorList>
            <person name="Takami H."/>
            <person name="Takaki Y."/>
            <person name="Uchiyama I."/>
        </authorList>
    </citation>
    <scope>NUCLEOTIDE SEQUENCE [LARGE SCALE GENOMIC DNA]</scope>
    <source>
        <strain>DSM 14371 / CIP 107618 / JCM 11309 / KCTC 3954 / HTE831</strain>
    </source>
</reference>
<protein>
    <recommendedName>
        <fullName evidence="1">NAD-dependent protein deacetylase</fullName>
        <ecNumber evidence="1 2">2.3.1.286</ecNumber>
    </recommendedName>
    <alternativeName>
        <fullName evidence="1">Regulatory protein SIR2 homolog</fullName>
    </alternativeName>
</protein>
<dbReference type="EC" id="2.3.1.286" evidence="1 2"/>
<dbReference type="EMBL" id="BA000028">
    <property type="protein sequence ID" value="BAC15115.1"/>
    <property type="molecule type" value="Genomic_DNA"/>
</dbReference>
<dbReference type="RefSeq" id="WP_011067556.1">
    <property type="nucleotide sequence ID" value="NC_004193.1"/>
</dbReference>
<dbReference type="SMR" id="Q8ELR0"/>
<dbReference type="STRING" id="221109.gene:10735411"/>
<dbReference type="KEGG" id="oih:OB3159"/>
<dbReference type="eggNOG" id="COG0846">
    <property type="taxonomic scope" value="Bacteria"/>
</dbReference>
<dbReference type="HOGENOM" id="CLU_023643_3_0_9"/>
<dbReference type="OrthoDB" id="9800582at2"/>
<dbReference type="PhylomeDB" id="Q8ELR0"/>
<dbReference type="Proteomes" id="UP000000822">
    <property type="component" value="Chromosome"/>
</dbReference>
<dbReference type="GO" id="GO:0005737">
    <property type="term" value="C:cytoplasm"/>
    <property type="evidence" value="ECO:0007669"/>
    <property type="project" value="UniProtKB-SubCell"/>
</dbReference>
<dbReference type="GO" id="GO:0017136">
    <property type="term" value="F:histone deacetylase activity, NAD-dependent"/>
    <property type="evidence" value="ECO:0007669"/>
    <property type="project" value="TreeGrafter"/>
</dbReference>
<dbReference type="GO" id="GO:0070403">
    <property type="term" value="F:NAD+ binding"/>
    <property type="evidence" value="ECO:0007669"/>
    <property type="project" value="UniProtKB-UniRule"/>
</dbReference>
<dbReference type="GO" id="GO:0008270">
    <property type="term" value="F:zinc ion binding"/>
    <property type="evidence" value="ECO:0007669"/>
    <property type="project" value="UniProtKB-UniRule"/>
</dbReference>
<dbReference type="CDD" id="cd01413">
    <property type="entry name" value="SIR2_Af2"/>
    <property type="match status" value="1"/>
</dbReference>
<dbReference type="Gene3D" id="3.30.1600.10">
    <property type="entry name" value="SIR2/SIRT2 'Small Domain"/>
    <property type="match status" value="1"/>
</dbReference>
<dbReference type="Gene3D" id="3.40.50.1220">
    <property type="entry name" value="TPP-binding domain"/>
    <property type="match status" value="1"/>
</dbReference>
<dbReference type="HAMAP" id="MF_01968">
    <property type="entry name" value="Sirtuin_ClassU"/>
    <property type="match status" value="1"/>
</dbReference>
<dbReference type="InterPro" id="IPR029035">
    <property type="entry name" value="DHS-like_NAD/FAD-binding_dom"/>
</dbReference>
<dbReference type="InterPro" id="IPR050134">
    <property type="entry name" value="NAD-dep_sirtuin_deacylases"/>
</dbReference>
<dbReference type="InterPro" id="IPR003000">
    <property type="entry name" value="Sirtuin"/>
</dbReference>
<dbReference type="InterPro" id="IPR026591">
    <property type="entry name" value="Sirtuin_cat_small_dom_sf"/>
</dbReference>
<dbReference type="InterPro" id="IPR028628">
    <property type="entry name" value="Sirtuin_class_U"/>
</dbReference>
<dbReference type="InterPro" id="IPR026590">
    <property type="entry name" value="Ssirtuin_cat_dom"/>
</dbReference>
<dbReference type="NCBIfam" id="NF001752">
    <property type="entry name" value="PRK00481.1-1"/>
    <property type="match status" value="1"/>
</dbReference>
<dbReference type="NCBIfam" id="NF001753">
    <property type="entry name" value="PRK00481.1-3"/>
    <property type="match status" value="1"/>
</dbReference>
<dbReference type="PANTHER" id="PTHR11085:SF4">
    <property type="entry name" value="NAD-DEPENDENT PROTEIN DEACYLASE"/>
    <property type="match status" value="1"/>
</dbReference>
<dbReference type="PANTHER" id="PTHR11085">
    <property type="entry name" value="NAD-DEPENDENT PROTEIN DEACYLASE SIRTUIN-5, MITOCHONDRIAL-RELATED"/>
    <property type="match status" value="1"/>
</dbReference>
<dbReference type="Pfam" id="PF02146">
    <property type="entry name" value="SIR2"/>
    <property type="match status" value="1"/>
</dbReference>
<dbReference type="SUPFAM" id="SSF52467">
    <property type="entry name" value="DHS-like NAD/FAD-binding domain"/>
    <property type="match status" value="1"/>
</dbReference>
<dbReference type="PROSITE" id="PS50305">
    <property type="entry name" value="SIRTUIN"/>
    <property type="match status" value="1"/>
</dbReference>
<feature type="chain" id="PRO_0000110333" description="NAD-dependent protein deacetylase">
    <location>
        <begin position="1"/>
        <end position="236"/>
    </location>
</feature>
<feature type="domain" description="Deacetylase sirtuin-type" evidence="2">
    <location>
        <begin position="1"/>
        <end position="236"/>
    </location>
</feature>
<feature type="active site" description="Proton acceptor" evidence="2">
    <location>
        <position position="114"/>
    </location>
</feature>
<feature type="binding site" evidence="1">
    <location>
        <position position="18"/>
    </location>
    <ligand>
        <name>NAD(+)</name>
        <dbReference type="ChEBI" id="CHEBI:57540"/>
    </ligand>
</feature>
<feature type="binding site" evidence="1">
    <location>
        <position position="22"/>
    </location>
    <ligand>
        <name>NAD(+)</name>
        <dbReference type="ChEBI" id="CHEBI:57540"/>
    </ligand>
</feature>
<feature type="binding site" evidence="1">
    <location>
        <position position="29"/>
    </location>
    <ligand>
        <name>NAD(+)</name>
        <dbReference type="ChEBI" id="CHEBI:57540"/>
    </ligand>
</feature>
<feature type="binding site" evidence="1">
    <location>
        <position position="29"/>
    </location>
    <ligand>
        <name>nicotinamide</name>
        <dbReference type="ChEBI" id="CHEBI:17154"/>
    </ligand>
</feature>
<feature type="binding site" evidence="1">
    <location>
        <position position="30"/>
    </location>
    <ligand>
        <name>NAD(+)</name>
        <dbReference type="ChEBI" id="CHEBI:57540"/>
    </ligand>
</feature>
<feature type="binding site" evidence="1">
    <location>
        <position position="96"/>
    </location>
    <ligand>
        <name>NAD(+)</name>
        <dbReference type="ChEBI" id="CHEBI:57540"/>
    </ligand>
</feature>
<feature type="binding site" evidence="1">
    <location>
        <position position="98"/>
    </location>
    <ligand>
        <name>NAD(+)</name>
        <dbReference type="ChEBI" id="CHEBI:57540"/>
    </ligand>
</feature>
<feature type="binding site" evidence="1">
    <location>
        <position position="98"/>
    </location>
    <ligand>
        <name>nicotinamide</name>
        <dbReference type="ChEBI" id="CHEBI:17154"/>
    </ligand>
</feature>
<feature type="binding site" evidence="1">
    <location>
        <position position="99"/>
    </location>
    <ligand>
        <name>NAD(+)</name>
        <dbReference type="ChEBI" id="CHEBI:57540"/>
    </ligand>
</feature>
<feature type="binding site" evidence="1">
    <location>
        <position position="99"/>
    </location>
    <ligand>
        <name>nicotinamide</name>
        <dbReference type="ChEBI" id="CHEBI:17154"/>
    </ligand>
</feature>
<feature type="binding site" evidence="1">
    <location>
        <position position="114"/>
    </location>
    <ligand>
        <name>NAD(+)</name>
        <dbReference type="ChEBI" id="CHEBI:57540"/>
    </ligand>
</feature>
<feature type="binding site" evidence="1">
    <location>
        <position position="122"/>
    </location>
    <ligand>
        <name>Zn(2+)</name>
        <dbReference type="ChEBI" id="CHEBI:29105"/>
    </ligand>
</feature>
<feature type="binding site" evidence="1">
    <location>
        <position position="125"/>
    </location>
    <ligand>
        <name>Zn(2+)</name>
        <dbReference type="ChEBI" id="CHEBI:29105"/>
    </ligand>
</feature>
<feature type="binding site" evidence="1">
    <location>
        <position position="141"/>
    </location>
    <ligand>
        <name>Zn(2+)</name>
        <dbReference type="ChEBI" id="CHEBI:29105"/>
    </ligand>
</feature>
<feature type="binding site" evidence="1">
    <location>
        <position position="143"/>
    </location>
    <ligand>
        <name>Zn(2+)</name>
        <dbReference type="ChEBI" id="CHEBI:29105"/>
    </ligand>
</feature>
<feature type="binding site" evidence="1">
    <location>
        <position position="181"/>
    </location>
    <ligand>
        <name>NAD(+)</name>
        <dbReference type="ChEBI" id="CHEBI:57540"/>
    </ligand>
</feature>
<feature type="binding site" evidence="1">
    <location>
        <position position="182"/>
    </location>
    <ligand>
        <name>NAD(+)</name>
        <dbReference type="ChEBI" id="CHEBI:57540"/>
    </ligand>
</feature>
<feature type="binding site" evidence="1">
    <location>
        <position position="206"/>
    </location>
    <ligand>
        <name>NAD(+)</name>
        <dbReference type="ChEBI" id="CHEBI:57540"/>
    </ligand>
</feature>
<feature type="binding site" evidence="1">
    <location>
        <position position="225"/>
    </location>
    <ligand>
        <name>NAD(+)</name>
        <dbReference type="ChEBI" id="CHEBI:57540"/>
    </ligand>
</feature>
<organism>
    <name type="scientific">Oceanobacillus iheyensis (strain DSM 14371 / CIP 107618 / JCM 11309 / KCTC 3954 / HTE831)</name>
    <dbReference type="NCBI Taxonomy" id="221109"/>
    <lineage>
        <taxon>Bacteria</taxon>
        <taxon>Bacillati</taxon>
        <taxon>Bacillota</taxon>
        <taxon>Bacilli</taxon>
        <taxon>Bacillales</taxon>
        <taxon>Bacillaceae</taxon>
        <taxon>Oceanobacillus</taxon>
    </lineage>
</organism>
<proteinExistence type="inferred from homology"/>
<name>NPD_OCEIH</name>
<keyword id="KW-0963">Cytoplasm</keyword>
<keyword id="KW-0479">Metal-binding</keyword>
<keyword id="KW-0520">NAD</keyword>
<keyword id="KW-1185">Reference proteome</keyword>
<keyword id="KW-0808">Transferase</keyword>
<keyword id="KW-0862">Zinc</keyword>
<sequence>MIKDWLQESNYTVIFTGAGMSTESGLPDFRSANTGLWKQHDPSKIASIDTLNNNVETFIDFYRERVLKVKEYGPHQGHYILAEWEKQGLVHSIVTQNVDGFHQASGSKIVHELHGTLQKLHCQSCGKEYSSKEYVENEYHCDCGGVLRPSIILFGEMLPQEAFQTAFNDAEKADLFVVLGSSLTVSPANQIPLIAKENGAKLVIVNQDPTPYDQYADMTISDQKIGEFLRSISNEG</sequence>
<accession>Q8ELR0</accession>
<comment type="function">
    <text evidence="1">NAD-dependent protein deacetylase which modulates the activities of several enzymes which are inactive in their acetylated form.</text>
</comment>
<comment type="catalytic activity">
    <reaction evidence="1">
        <text>N(6)-acetyl-L-lysyl-[protein] + NAD(+) + H2O = 2''-O-acetyl-ADP-D-ribose + nicotinamide + L-lysyl-[protein]</text>
        <dbReference type="Rhea" id="RHEA:43636"/>
        <dbReference type="Rhea" id="RHEA-COMP:9752"/>
        <dbReference type="Rhea" id="RHEA-COMP:10731"/>
        <dbReference type="ChEBI" id="CHEBI:15377"/>
        <dbReference type="ChEBI" id="CHEBI:17154"/>
        <dbReference type="ChEBI" id="CHEBI:29969"/>
        <dbReference type="ChEBI" id="CHEBI:57540"/>
        <dbReference type="ChEBI" id="CHEBI:61930"/>
        <dbReference type="ChEBI" id="CHEBI:83767"/>
        <dbReference type="EC" id="2.3.1.286"/>
    </reaction>
</comment>
<comment type="cofactor">
    <cofactor evidence="1">
        <name>Zn(2+)</name>
        <dbReference type="ChEBI" id="CHEBI:29105"/>
    </cofactor>
    <text evidence="1">Binds 1 zinc ion per subunit.</text>
</comment>
<comment type="subcellular location">
    <subcellularLocation>
        <location evidence="1">Cytoplasm</location>
    </subcellularLocation>
</comment>
<comment type="similarity">
    <text evidence="1">Belongs to the sirtuin family. Class U subfamily.</text>
</comment>